<feature type="chain" id="PRO_1000051819" description="Proton extrusion protein PxcA">
    <location>
        <begin position="1"/>
        <end position="379"/>
    </location>
</feature>
<feature type="transmembrane region" description="Helical" evidence="1">
    <location>
        <begin position="153"/>
        <end position="173"/>
    </location>
</feature>
<feature type="transmembrane region" description="Helical" evidence="1">
    <location>
        <begin position="254"/>
        <end position="274"/>
    </location>
</feature>
<feature type="transmembrane region" description="Helical" evidence="1">
    <location>
        <begin position="300"/>
        <end position="320"/>
    </location>
</feature>
<feature type="transmembrane region" description="Helical" evidence="1">
    <location>
        <begin position="337"/>
        <end position="357"/>
    </location>
</feature>
<name>PXCA_SYNR3</name>
<dbReference type="EMBL" id="CT978603">
    <property type="protein sequence ID" value="CAK28136.1"/>
    <property type="molecule type" value="Genomic_DNA"/>
</dbReference>
<dbReference type="STRING" id="316278.SynRCC307_1233"/>
<dbReference type="KEGG" id="syr:SynRCC307_1233"/>
<dbReference type="eggNOG" id="ENOG502Z8DN">
    <property type="taxonomic scope" value="Bacteria"/>
</dbReference>
<dbReference type="HOGENOM" id="CLU_690401_0_0_3"/>
<dbReference type="OrthoDB" id="418298at2"/>
<dbReference type="Proteomes" id="UP000001115">
    <property type="component" value="Chromosome"/>
</dbReference>
<dbReference type="GO" id="GO:0005886">
    <property type="term" value="C:plasma membrane"/>
    <property type="evidence" value="ECO:0007669"/>
    <property type="project" value="UniProtKB-SubCell"/>
</dbReference>
<dbReference type="GO" id="GO:0015078">
    <property type="term" value="F:proton transmembrane transporter activity"/>
    <property type="evidence" value="ECO:0007669"/>
    <property type="project" value="UniProtKB-UniRule"/>
</dbReference>
<dbReference type="HAMAP" id="MF_01308">
    <property type="entry name" value="CemA_PxcA"/>
    <property type="match status" value="1"/>
</dbReference>
<dbReference type="InterPro" id="IPR004282">
    <property type="entry name" value="CemA"/>
</dbReference>
<dbReference type="NCBIfam" id="NF002705">
    <property type="entry name" value="PRK02507.1-4"/>
    <property type="match status" value="1"/>
</dbReference>
<dbReference type="PANTHER" id="PTHR33650:SF2">
    <property type="entry name" value="CHLOROPLAST ENVELOPE MEMBRANE PROTEIN"/>
    <property type="match status" value="1"/>
</dbReference>
<dbReference type="PANTHER" id="PTHR33650">
    <property type="entry name" value="CHLOROPLAST ENVELOPE MEMBRANE PROTEIN-RELATED"/>
    <property type="match status" value="1"/>
</dbReference>
<dbReference type="Pfam" id="PF03040">
    <property type="entry name" value="CemA"/>
    <property type="match status" value="1"/>
</dbReference>
<proteinExistence type="inferred from homology"/>
<gene>
    <name evidence="1" type="primary">pxcA</name>
    <name type="ordered locus">SynRCC307_1233</name>
</gene>
<reference key="1">
    <citation type="submission" date="2006-05" db="EMBL/GenBank/DDBJ databases">
        <authorList>
            <consortium name="Genoscope"/>
        </authorList>
    </citation>
    <scope>NUCLEOTIDE SEQUENCE [LARGE SCALE GENOMIC DNA]</scope>
    <source>
        <strain>RCC307</strain>
    </source>
</reference>
<organism>
    <name type="scientific">Synechococcus sp. (strain RCC307)</name>
    <dbReference type="NCBI Taxonomy" id="316278"/>
    <lineage>
        <taxon>Bacteria</taxon>
        <taxon>Bacillati</taxon>
        <taxon>Cyanobacteriota</taxon>
        <taxon>Cyanophyceae</taxon>
        <taxon>Synechococcales</taxon>
        <taxon>Synechococcaceae</taxon>
        <taxon>Synechococcus</taxon>
    </lineage>
</organism>
<comment type="function">
    <text evidence="1">Required for H(+) efflux immediately after light irradiation to form a rapid H(+) concentration gradient across the thylakoid membranes. Together with PxcL, contributes to transient H(+) uptake following dark to light transition.</text>
</comment>
<comment type="subcellular location">
    <subcellularLocation>
        <location evidence="1">Cell inner membrane</location>
        <topology evidence="1">Multi-pass membrane protein</topology>
    </subcellularLocation>
</comment>
<comment type="similarity">
    <text evidence="1">Belongs to the CemA family.</text>
</comment>
<accession>A5GTC7</accession>
<evidence type="ECO:0000255" key="1">
    <source>
        <dbReference type="HAMAP-Rule" id="MF_01308"/>
    </source>
</evidence>
<keyword id="KW-0997">Cell inner membrane</keyword>
<keyword id="KW-1003">Cell membrane</keyword>
<keyword id="KW-0375">Hydrogen ion transport</keyword>
<keyword id="KW-0406">Ion transport</keyword>
<keyword id="KW-0472">Membrane</keyword>
<keyword id="KW-1185">Reference proteome</keyword>
<keyword id="KW-0812">Transmembrane</keyword>
<keyword id="KW-1133">Transmembrane helix</keyword>
<keyword id="KW-0813">Transport</keyword>
<sequence>MGLNDWLGTFAKAEGLDLSSDLEQAYEAALMIQGLELEYFNDRPVRTDVNLGLPQATQTQIFRRFRSALEICRALLSSIERQRAQLDSQELRQLQLIESVVRRYRSKDGQTLFQRPDPLPRSLLGVFDRVRNQLDPEAEANVVAGFRRRRDSTLVSLRILLLMILVPLLLQQISRTYVISPLVDRIAPDIPFLSYTKPRLQQSAVASLREYKAEIEFAALLEGEDSPSVEELRQKLTLKAAELKDEADSESTTAIKNVLADVVATIGFVLVCLFGRDEIRVLRGFFDEVVYGLSDNAKAFVIILFTDIFVGFHSPEGWTVLLQGISSHLGIPAEEQFIDLFIATFPVILATIFKYWIFRYLNRVSPSSVTTLRGMNGGG</sequence>
<protein>
    <recommendedName>
        <fullName evidence="1">Proton extrusion protein PxcA</fullName>
    </recommendedName>
</protein>